<evidence type="ECO:0000305" key="1"/>
<evidence type="ECO:0000305" key="2">
    <source>
    </source>
</evidence>
<dbReference type="EMBL" id="Z72739">
    <property type="protein sequence ID" value="CAA96932.1"/>
    <property type="molecule type" value="Genomic_DNA"/>
</dbReference>
<dbReference type="EMBL" id="AY693253">
    <property type="protein sequence ID" value="AAT93272.1"/>
    <property type="molecule type" value="Genomic_DNA"/>
</dbReference>
<dbReference type="PIR" id="S64239">
    <property type="entry name" value="S64239"/>
</dbReference>
<dbReference type="DIP" id="DIP-5110N"/>
<dbReference type="IntAct" id="P53085">
    <property type="interactions" value="1"/>
</dbReference>
<dbReference type="STRING" id="4932.YGL217C"/>
<dbReference type="PaxDb" id="4932-YGL217C"/>
<dbReference type="EnsemblFungi" id="YGL217C_mRNA">
    <property type="protein sequence ID" value="YGL217C"/>
    <property type="gene ID" value="YGL217C"/>
</dbReference>
<dbReference type="AGR" id="SGD:S000003185"/>
<dbReference type="SGD" id="S000003185">
    <property type="gene designation" value="YGL217C"/>
</dbReference>
<dbReference type="HOGENOM" id="CLU_2135477_0_0_1"/>
<name>YGW7_YEAST</name>
<protein>
    <recommendedName>
        <fullName>Putative uncharacterized protein YGL217C</fullName>
    </recommendedName>
</protein>
<proteinExistence type="uncertain"/>
<organism>
    <name type="scientific">Saccharomyces cerevisiae (strain ATCC 204508 / S288c)</name>
    <name type="common">Baker's yeast</name>
    <dbReference type="NCBI Taxonomy" id="559292"/>
    <lineage>
        <taxon>Eukaryota</taxon>
        <taxon>Fungi</taxon>
        <taxon>Dikarya</taxon>
        <taxon>Ascomycota</taxon>
        <taxon>Saccharomycotina</taxon>
        <taxon>Saccharomycetes</taxon>
        <taxon>Saccharomycetales</taxon>
        <taxon>Saccharomycetaceae</taxon>
        <taxon>Saccharomyces</taxon>
    </lineage>
</organism>
<accession>P53085</accession>
<gene>
    <name type="ordered locus">YGL217C</name>
</gene>
<comment type="miscellaneous">
    <text evidence="1">Almost completely overlaps KIP3.</text>
</comment>
<comment type="caution">
    <text evidence="2">Product of a dubious gene prediction unlikely to encode a functional protein. Because of that it is not part of the S.cerevisiae S288c complete/reference proteome set.</text>
</comment>
<sequence>MSILSSTQSTILRIPSGLITFLLSKLFLLLRVEPSSASMSISESELLLMGNINDESPKPGKLASAPLASLTNLVFSIDVKGLTLIATTMEDCLVSGTFMLVSIVYSWKENSSS</sequence>
<feature type="chain" id="PRO_0000202717" description="Putative uncharacterized protein YGL217C">
    <location>
        <begin position="1"/>
        <end position="113"/>
    </location>
</feature>
<reference key="1">
    <citation type="journal article" date="1997" name="Yeast">
        <title>Sequence analysis of 203 kilobases from Saccharomyces cerevisiae chromosome VII.</title>
        <authorList>
            <person name="Rieger M."/>
            <person name="Brueckner M."/>
            <person name="Schaefer M."/>
            <person name="Mueller-Auer S."/>
        </authorList>
    </citation>
    <scope>NUCLEOTIDE SEQUENCE [GENOMIC DNA]</scope>
    <source>
        <strain>ATCC 204508 / S288c</strain>
    </source>
</reference>
<reference key="2">
    <citation type="journal article" date="1997" name="Nature">
        <title>The nucleotide sequence of Saccharomyces cerevisiae chromosome VII.</title>
        <authorList>
            <person name="Tettelin H."/>
            <person name="Agostoni-Carbone M.L."/>
            <person name="Albermann K."/>
            <person name="Albers M."/>
            <person name="Arroyo J."/>
            <person name="Backes U."/>
            <person name="Barreiros T."/>
            <person name="Bertani I."/>
            <person name="Bjourson A.J."/>
            <person name="Brueckner M."/>
            <person name="Bruschi C.V."/>
            <person name="Carignani G."/>
            <person name="Castagnoli L."/>
            <person name="Cerdan E."/>
            <person name="Clemente M.L."/>
            <person name="Coblenz A."/>
            <person name="Coglievina M."/>
            <person name="Coissac E."/>
            <person name="Defoor E."/>
            <person name="Del Bino S."/>
            <person name="Delius H."/>
            <person name="Delneri D."/>
            <person name="de Wergifosse P."/>
            <person name="Dujon B."/>
            <person name="Durand P."/>
            <person name="Entian K.-D."/>
            <person name="Eraso P."/>
            <person name="Escribano V."/>
            <person name="Fabiani L."/>
            <person name="Fartmann B."/>
            <person name="Feroli F."/>
            <person name="Feuermann M."/>
            <person name="Frontali L."/>
            <person name="Garcia-Gonzalez M."/>
            <person name="Garcia-Saez M.I."/>
            <person name="Goffeau A."/>
            <person name="Guerreiro P."/>
            <person name="Hani J."/>
            <person name="Hansen M."/>
            <person name="Hebling U."/>
            <person name="Hernandez K."/>
            <person name="Heumann K."/>
            <person name="Hilger F."/>
            <person name="Hofmann B."/>
            <person name="Indge K.J."/>
            <person name="James C.M."/>
            <person name="Klima R."/>
            <person name="Koetter P."/>
            <person name="Kramer B."/>
            <person name="Kramer W."/>
            <person name="Lauquin G."/>
            <person name="Leuther H."/>
            <person name="Louis E.J."/>
            <person name="Maillier E."/>
            <person name="Marconi A."/>
            <person name="Martegani E."/>
            <person name="Mazon M.J."/>
            <person name="Mazzoni C."/>
            <person name="McReynolds A.D.K."/>
            <person name="Melchioretto P."/>
            <person name="Mewes H.-W."/>
            <person name="Minenkova O."/>
            <person name="Mueller-Auer S."/>
            <person name="Nawrocki A."/>
            <person name="Netter P."/>
            <person name="Neu R."/>
            <person name="Nombela C."/>
            <person name="Oliver S.G."/>
            <person name="Panzeri L."/>
            <person name="Paoluzi S."/>
            <person name="Plevani P."/>
            <person name="Portetelle D."/>
            <person name="Portillo F."/>
            <person name="Potier S."/>
            <person name="Purnelle B."/>
            <person name="Rieger M."/>
            <person name="Riles L."/>
            <person name="Rinaldi T."/>
            <person name="Robben J."/>
            <person name="Rodrigues-Pousada C."/>
            <person name="Rodriguez-Belmonte E."/>
            <person name="Rodriguez-Torres A.M."/>
            <person name="Rose M."/>
            <person name="Ruzzi M."/>
            <person name="Saliola M."/>
            <person name="Sanchez-Perez M."/>
            <person name="Schaefer B."/>
            <person name="Schaefer M."/>
            <person name="Scharfe M."/>
            <person name="Schmidheini T."/>
            <person name="Schreer A."/>
            <person name="Skala J."/>
            <person name="Souciet J.-L."/>
            <person name="Steensma H.Y."/>
            <person name="Talla E."/>
            <person name="Thierry A."/>
            <person name="Vandenbol M."/>
            <person name="van der Aart Q.J.M."/>
            <person name="Van Dyck L."/>
            <person name="Vanoni M."/>
            <person name="Verhasselt P."/>
            <person name="Voet M."/>
            <person name="Volckaert G."/>
            <person name="Wambutt R."/>
            <person name="Watson M.D."/>
            <person name="Weber N."/>
            <person name="Wedler E."/>
            <person name="Wedler H."/>
            <person name="Wipfli P."/>
            <person name="Wolf K."/>
            <person name="Wright L.F."/>
            <person name="Zaccaria P."/>
            <person name="Zimmermann M."/>
            <person name="Zollner A."/>
            <person name="Kleine K."/>
        </authorList>
    </citation>
    <scope>NUCLEOTIDE SEQUENCE [LARGE SCALE GENOMIC DNA]</scope>
    <source>
        <strain>ATCC 204508 / S288c</strain>
    </source>
</reference>
<reference key="3">
    <citation type="journal article" date="2014" name="G3 (Bethesda)">
        <title>The reference genome sequence of Saccharomyces cerevisiae: Then and now.</title>
        <authorList>
            <person name="Engel S.R."/>
            <person name="Dietrich F.S."/>
            <person name="Fisk D.G."/>
            <person name="Binkley G."/>
            <person name="Balakrishnan R."/>
            <person name="Costanzo M.C."/>
            <person name="Dwight S.S."/>
            <person name="Hitz B.C."/>
            <person name="Karra K."/>
            <person name="Nash R.S."/>
            <person name="Weng S."/>
            <person name="Wong E.D."/>
            <person name="Lloyd P."/>
            <person name="Skrzypek M.S."/>
            <person name="Miyasato S.R."/>
            <person name="Simison M."/>
            <person name="Cherry J.M."/>
        </authorList>
    </citation>
    <scope>GENOME REANNOTATION</scope>
    <source>
        <strain>ATCC 204508 / S288c</strain>
    </source>
</reference>
<reference key="4">
    <citation type="journal article" date="2007" name="Genome Res.">
        <title>Approaching a complete repository of sequence-verified protein-encoding clones for Saccharomyces cerevisiae.</title>
        <authorList>
            <person name="Hu Y."/>
            <person name="Rolfs A."/>
            <person name="Bhullar B."/>
            <person name="Murthy T.V.S."/>
            <person name="Zhu C."/>
            <person name="Berger M.F."/>
            <person name="Camargo A.A."/>
            <person name="Kelley F."/>
            <person name="McCarron S."/>
            <person name="Jepson D."/>
            <person name="Richardson A."/>
            <person name="Raphael J."/>
            <person name="Moreira D."/>
            <person name="Taycher E."/>
            <person name="Zuo D."/>
            <person name="Mohr S."/>
            <person name="Kane M.F."/>
            <person name="Williamson J."/>
            <person name="Simpson A.J.G."/>
            <person name="Bulyk M.L."/>
            <person name="Harlow E."/>
            <person name="Marsischky G."/>
            <person name="Kolodner R.D."/>
            <person name="LaBaer J."/>
        </authorList>
    </citation>
    <scope>NUCLEOTIDE SEQUENCE [GENOMIC DNA]</scope>
    <source>
        <strain>ATCC 204508 / S288c</strain>
    </source>
</reference>